<gene>
    <name evidence="1" type="primary">norW</name>
    <name evidence="1" type="synonym">flrR</name>
    <name type="ordered locus">UTI89_C3073</name>
</gene>
<name>NORW_ECOUT</name>
<organism>
    <name type="scientific">Escherichia coli (strain UTI89 / UPEC)</name>
    <dbReference type="NCBI Taxonomy" id="364106"/>
    <lineage>
        <taxon>Bacteria</taxon>
        <taxon>Pseudomonadati</taxon>
        <taxon>Pseudomonadota</taxon>
        <taxon>Gammaproteobacteria</taxon>
        <taxon>Enterobacterales</taxon>
        <taxon>Enterobacteriaceae</taxon>
        <taxon>Escherichia</taxon>
    </lineage>
</organism>
<feature type="chain" id="PRO_0000305606" description="Nitric oxide reductase FlRd-NAD(+) reductase">
    <location>
        <begin position="1"/>
        <end position="377"/>
    </location>
</feature>
<protein>
    <recommendedName>
        <fullName evidence="1">Nitric oxide reductase FlRd-NAD(+) reductase</fullName>
        <ecNumber evidence="1">1.18.1.-</ecNumber>
    </recommendedName>
    <alternativeName>
        <fullName evidence="1">Flavorubredoxin reductase</fullName>
        <shortName evidence="1">FlRd-reductase</shortName>
        <shortName evidence="1">FlavoRb reductase</shortName>
    </alternativeName>
</protein>
<comment type="function">
    <text evidence="1">One of at least two accessory proteins for anaerobic nitric oxide (NO) reductase. Reduces the rubredoxin moiety of NO reductase.</text>
</comment>
<comment type="catalytic activity">
    <reaction evidence="1">
        <text>2 reduced [nitric oxide reductase rubredoxin domain] + NAD(+) + H(+) = 2 oxidized [nitric oxide reductase rubredoxin domain] + NADH</text>
        <dbReference type="Rhea" id="RHEA:42960"/>
        <dbReference type="Rhea" id="RHEA-COMP:10304"/>
        <dbReference type="Rhea" id="RHEA-COMP:10305"/>
        <dbReference type="ChEBI" id="CHEBI:15378"/>
        <dbReference type="ChEBI" id="CHEBI:29033"/>
        <dbReference type="ChEBI" id="CHEBI:29034"/>
        <dbReference type="ChEBI" id="CHEBI:57540"/>
        <dbReference type="ChEBI" id="CHEBI:57945"/>
    </reaction>
</comment>
<comment type="cofactor">
    <cofactor evidence="1">
        <name>FAD</name>
        <dbReference type="ChEBI" id="CHEBI:57692"/>
    </cofactor>
</comment>
<comment type="pathway">
    <text evidence="1">Nitrogen metabolism; nitric oxide reduction.</text>
</comment>
<comment type="subcellular location">
    <subcellularLocation>
        <location evidence="1">Cytoplasm</location>
    </subcellularLocation>
</comment>
<comment type="similarity">
    <text evidence="1">Belongs to the FAD-dependent oxidoreductase family.</text>
</comment>
<proteinExistence type="inferred from homology"/>
<sequence>MSNGIVIIGSGFAARQLVKNIRKQDASIPLTLIAADSMDEYNKPDLSHVISQGQRADDLTRQTAGEFAEQFNLRLFPHTWVTDIDAEAHVVKSQNNQWQYDKLVLATGASAFVPPVPGRELMLTLNSQQEYRACETQLRDARRVLIVGGGLIGSELAMDFCRAGKAVTLIDNAASILASLMPPEVSSRLQHRLTEMGVHLLLKSQLQGLEKTDSGILATLDRQRCIEVDAVIAATGLRPETALARRAGLTINRGVCVDSYLQTSNADIYALGDCAEINGQVLPFLQPIQLSAMVLAKNLLGNNTPLKLPAMLVKIKTPELPLHLAGETQRQDLRWQINTERQGMVARGVDDADQLRAFVVSEDRMKEAFGLLKTLSM</sequence>
<dbReference type="EC" id="1.18.1.-" evidence="1"/>
<dbReference type="EMBL" id="CP000243">
    <property type="protein sequence ID" value="ABE08525.1"/>
    <property type="molecule type" value="Genomic_DNA"/>
</dbReference>
<dbReference type="RefSeq" id="WP_000064713.1">
    <property type="nucleotide sequence ID" value="NZ_CP064825.1"/>
</dbReference>
<dbReference type="SMR" id="Q1R7Y9"/>
<dbReference type="KEGG" id="eci:UTI89_C3073"/>
<dbReference type="HOGENOM" id="CLU_003291_4_4_6"/>
<dbReference type="UniPathway" id="UPA00638"/>
<dbReference type="Proteomes" id="UP000001952">
    <property type="component" value="Chromosome"/>
</dbReference>
<dbReference type="GO" id="GO:0005737">
    <property type="term" value="C:cytoplasm"/>
    <property type="evidence" value="ECO:0007669"/>
    <property type="project" value="UniProtKB-SubCell"/>
</dbReference>
<dbReference type="GO" id="GO:0016731">
    <property type="term" value="F:oxidoreductase activity, acting on iron-sulfur proteins as donors, NAD or NADP as acceptor"/>
    <property type="evidence" value="ECO:0007669"/>
    <property type="project" value="UniProtKB-UniRule"/>
</dbReference>
<dbReference type="FunFam" id="3.30.390.120:FF:000001">
    <property type="entry name" value="Nitric oxide reductase FlRd-NAD(+) reductase"/>
    <property type="match status" value="1"/>
</dbReference>
<dbReference type="FunFam" id="3.50.50.60:FF:000075">
    <property type="entry name" value="Nitric oxide reductase FlRd-NAD(+) reductase"/>
    <property type="match status" value="1"/>
</dbReference>
<dbReference type="Gene3D" id="3.30.390.120">
    <property type="match status" value="1"/>
</dbReference>
<dbReference type="Gene3D" id="3.50.50.60">
    <property type="entry name" value="FAD/NAD(P)-binding domain"/>
    <property type="match status" value="2"/>
</dbReference>
<dbReference type="HAMAP" id="MF_01313">
    <property type="entry name" value="NorW"/>
    <property type="match status" value="1"/>
</dbReference>
<dbReference type="InterPro" id="IPR050260">
    <property type="entry name" value="FAD-bd_OxRdtase"/>
</dbReference>
<dbReference type="InterPro" id="IPR036188">
    <property type="entry name" value="FAD/NAD-bd_sf"/>
</dbReference>
<dbReference type="InterPro" id="IPR023753">
    <property type="entry name" value="FAD/NAD-binding_dom"/>
</dbReference>
<dbReference type="InterPro" id="IPR023961">
    <property type="entry name" value="NO_rdtase_NorW"/>
</dbReference>
<dbReference type="InterPro" id="IPR041364">
    <property type="entry name" value="Rbx-bd"/>
</dbReference>
<dbReference type="NCBIfam" id="NF003437">
    <property type="entry name" value="PRK04965.1"/>
    <property type="match status" value="1"/>
</dbReference>
<dbReference type="PANTHER" id="PTHR43429:SF3">
    <property type="entry name" value="NITRITE REDUCTASE [NAD(P)H]"/>
    <property type="match status" value="1"/>
</dbReference>
<dbReference type="PANTHER" id="PTHR43429">
    <property type="entry name" value="PYRIDINE NUCLEOTIDE-DISULFIDE OXIDOREDUCTASE DOMAIN-CONTAINING"/>
    <property type="match status" value="1"/>
</dbReference>
<dbReference type="Pfam" id="PF07992">
    <property type="entry name" value="Pyr_redox_2"/>
    <property type="match status" value="1"/>
</dbReference>
<dbReference type="Pfam" id="PF18113">
    <property type="entry name" value="Rbx_binding"/>
    <property type="match status" value="1"/>
</dbReference>
<dbReference type="PRINTS" id="PR00368">
    <property type="entry name" value="FADPNR"/>
</dbReference>
<dbReference type="PRINTS" id="PR00411">
    <property type="entry name" value="PNDRDTASEI"/>
</dbReference>
<dbReference type="SUPFAM" id="SSF51905">
    <property type="entry name" value="FAD/NAD(P)-binding domain"/>
    <property type="match status" value="1"/>
</dbReference>
<evidence type="ECO:0000255" key="1">
    <source>
        <dbReference type="HAMAP-Rule" id="MF_01313"/>
    </source>
</evidence>
<accession>Q1R7Y9</accession>
<keyword id="KW-0963">Cytoplasm</keyword>
<keyword id="KW-0274">FAD</keyword>
<keyword id="KW-0285">Flavoprotein</keyword>
<keyword id="KW-0520">NAD</keyword>
<keyword id="KW-0560">Oxidoreductase</keyword>
<reference key="1">
    <citation type="journal article" date="2006" name="Proc. Natl. Acad. Sci. U.S.A.">
        <title>Identification of genes subject to positive selection in uropathogenic strains of Escherichia coli: a comparative genomics approach.</title>
        <authorList>
            <person name="Chen S.L."/>
            <person name="Hung C.-S."/>
            <person name="Xu J."/>
            <person name="Reigstad C.S."/>
            <person name="Magrini V."/>
            <person name="Sabo A."/>
            <person name="Blasiar D."/>
            <person name="Bieri T."/>
            <person name="Meyer R.R."/>
            <person name="Ozersky P."/>
            <person name="Armstrong J.R."/>
            <person name="Fulton R.S."/>
            <person name="Latreille J.P."/>
            <person name="Spieth J."/>
            <person name="Hooton T.M."/>
            <person name="Mardis E.R."/>
            <person name="Hultgren S.J."/>
            <person name="Gordon J.I."/>
        </authorList>
    </citation>
    <scope>NUCLEOTIDE SEQUENCE [LARGE SCALE GENOMIC DNA]</scope>
    <source>
        <strain>UTI89 / UPEC</strain>
    </source>
</reference>